<evidence type="ECO:0000255" key="1">
    <source>
        <dbReference type="HAMAP-Rule" id="MF_00642"/>
    </source>
</evidence>
<name>PSBE_SOLTU</name>
<sequence length="83" mass="9397">MSGSTGERSFADIITSIRYWVIHSITIPSLFIAGWLFVSTGLAYDVFGSPRPNEYFTESRQGIPLITGRFDPLEQLDEFSRSF</sequence>
<gene>
    <name evidence="1" type="primary">psbE</name>
</gene>
<reference key="1">
    <citation type="journal article" date="2006" name="Plant Cell Rep.">
        <title>The complete chloroplast genome sequences of Solanum tuberosum and comparative analysis with Solanaceae species identified the presence of a 241-bp deletion in cultivated potato chloroplast DNA sequence.</title>
        <authorList>
            <person name="Chung H.-J."/>
            <person name="Jung J.D."/>
            <person name="Park H.-W."/>
            <person name="Kim J.-H."/>
            <person name="Cha H.W."/>
            <person name="Min S.R."/>
            <person name="Jeong W.-J."/>
            <person name="Liu J.R."/>
        </authorList>
    </citation>
    <scope>NUCLEOTIDE SEQUENCE [LARGE SCALE GENOMIC DNA]</scope>
    <source>
        <strain>cv. Desiree</strain>
    </source>
</reference>
<reference key="2">
    <citation type="submission" date="2006-02" db="EMBL/GenBank/DDBJ databases">
        <title>Complete chloroplast genome sequences of Solanum tuberosum cultivar Desiree and comparative analyses with other Solanaceae genomes.</title>
        <authorList>
            <person name="Gargano D."/>
            <person name="Scotti N."/>
            <person name="Vezzi A."/>
            <person name="Bilardi A."/>
            <person name="Valle G."/>
            <person name="Grillo S."/>
            <person name="Cardi T."/>
        </authorList>
    </citation>
    <scope>NUCLEOTIDE SEQUENCE [LARGE SCALE GENOMIC DNA]</scope>
    <source>
        <strain>cv. Desiree</strain>
    </source>
</reference>
<dbReference type="EMBL" id="DQ231562">
    <property type="protein sequence ID" value="ABB90057.1"/>
    <property type="molecule type" value="Genomic_DNA"/>
</dbReference>
<dbReference type="EMBL" id="DQ386163">
    <property type="protein sequence ID" value="ABD47074.1"/>
    <property type="molecule type" value="Genomic_DNA"/>
</dbReference>
<dbReference type="RefSeq" id="YP_635656.1">
    <property type="nucleotide sequence ID" value="NC_008096.2"/>
</dbReference>
<dbReference type="SMR" id="Q2VEG1"/>
<dbReference type="FunCoup" id="Q2VEG1">
    <property type="interactions" value="38"/>
</dbReference>
<dbReference type="STRING" id="4113.Q2VEG1"/>
<dbReference type="PaxDb" id="4113-PGSC0003DMT400013592"/>
<dbReference type="GeneID" id="4099861"/>
<dbReference type="KEGG" id="sot:4099861"/>
<dbReference type="eggNOG" id="ENOG502S3QA">
    <property type="taxonomic scope" value="Eukaryota"/>
</dbReference>
<dbReference type="InParanoid" id="Q2VEG1"/>
<dbReference type="OrthoDB" id="1245051at2759"/>
<dbReference type="Proteomes" id="UP000011115">
    <property type="component" value="Unassembled WGS sequence"/>
</dbReference>
<dbReference type="GO" id="GO:0009535">
    <property type="term" value="C:chloroplast thylakoid membrane"/>
    <property type="evidence" value="ECO:0007669"/>
    <property type="project" value="UniProtKB-SubCell"/>
</dbReference>
<dbReference type="GO" id="GO:0009539">
    <property type="term" value="C:photosystem II reaction center"/>
    <property type="evidence" value="ECO:0007669"/>
    <property type="project" value="InterPro"/>
</dbReference>
<dbReference type="GO" id="GO:0009055">
    <property type="term" value="F:electron transfer activity"/>
    <property type="evidence" value="ECO:0007669"/>
    <property type="project" value="UniProtKB-UniRule"/>
</dbReference>
<dbReference type="GO" id="GO:0020037">
    <property type="term" value="F:heme binding"/>
    <property type="evidence" value="ECO:0007669"/>
    <property type="project" value="InterPro"/>
</dbReference>
<dbReference type="GO" id="GO:0005506">
    <property type="term" value="F:iron ion binding"/>
    <property type="evidence" value="ECO:0007669"/>
    <property type="project" value="UniProtKB-UniRule"/>
</dbReference>
<dbReference type="GO" id="GO:0009767">
    <property type="term" value="P:photosynthetic electron transport chain"/>
    <property type="evidence" value="ECO:0007669"/>
    <property type="project" value="InterPro"/>
</dbReference>
<dbReference type="Gene3D" id="1.20.5.860">
    <property type="entry name" value="Photosystem II cytochrome b559, alpha subunit"/>
    <property type="match status" value="1"/>
</dbReference>
<dbReference type="HAMAP" id="MF_00642">
    <property type="entry name" value="PSII_PsbE"/>
    <property type="match status" value="1"/>
</dbReference>
<dbReference type="InterPro" id="IPR006217">
    <property type="entry name" value="PSII_cyt_b559_asu"/>
</dbReference>
<dbReference type="InterPro" id="IPR037025">
    <property type="entry name" value="PSII_cyt_b559_asu_sf"/>
</dbReference>
<dbReference type="InterPro" id="IPR006216">
    <property type="entry name" value="PSII_cyt_b559_CS"/>
</dbReference>
<dbReference type="InterPro" id="IPR013081">
    <property type="entry name" value="PSII_cyt_b559_N"/>
</dbReference>
<dbReference type="InterPro" id="IPR013082">
    <property type="entry name" value="PSII_cytb559_asu_lum"/>
</dbReference>
<dbReference type="NCBIfam" id="TIGR01332">
    <property type="entry name" value="cyt_b559_alpha"/>
    <property type="match status" value="1"/>
</dbReference>
<dbReference type="PANTHER" id="PTHR33391">
    <property type="entry name" value="CYTOCHROME B559 SUBUNIT BETA-RELATED"/>
    <property type="match status" value="1"/>
</dbReference>
<dbReference type="PANTHER" id="PTHR33391:SF9">
    <property type="entry name" value="CYTOCHROME B559 SUBUNIT BETA-RELATED"/>
    <property type="match status" value="1"/>
</dbReference>
<dbReference type="Pfam" id="PF00283">
    <property type="entry name" value="Cytochrom_B559"/>
    <property type="match status" value="1"/>
</dbReference>
<dbReference type="Pfam" id="PF00284">
    <property type="entry name" value="Cytochrom_B559a"/>
    <property type="match status" value="1"/>
</dbReference>
<dbReference type="PIRSF" id="PIRSF000036">
    <property type="entry name" value="PsbE"/>
    <property type="match status" value="1"/>
</dbReference>
<dbReference type="SUPFAM" id="SSF161045">
    <property type="entry name" value="Cytochrome b559 subunits"/>
    <property type="match status" value="1"/>
</dbReference>
<dbReference type="PROSITE" id="PS00537">
    <property type="entry name" value="CYTOCHROME_B559"/>
    <property type="match status" value="1"/>
</dbReference>
<proteinExistence type="inferred from homology"/>
<accession>Q2VEG1</accession>
<comment type="function">
    <text evidence="1">This b-type cytochrome is tightly associated with the reaction center of photosystem II (PSII). PSII is a light-driven water:plastoquinone oxidoreductase that uses light energy to abstract electrons from H(2)O, generating O(2) and a proton gradient subsequently used for ATP formation. It consists of a core antenna complex that captures photons, and an electron transfer chain that converts photonic excitation into a charge separation.</text>
</comment>
<comment type="cofactor">
    <cofactor evidence="1">
        <name>heme b</name>
        <dbReference type="ChEBI" id="CHEBI:60344"/>
    </cofactor>
    <text evidence="1">With its partner (PsbF) binds heme. PSII binds additional chlorophylls, carotenoids and specific lipids.</text>
</comment>
<comment type="subunit">
    <text evidence="1">Heterodimer of an alpha subunit and a beta subunit. PSII is composed of 1 copy each of membrane proteins PsbA, PsbB, PsbC, PsbD, PsbE, PsbF, PsbH, PsbI, PsbJ, PsbK, PsbL, PsbM, PsbT, PsbX, PsbY, PsbZ, Psb30/Ycf12, at least 3 peripheral proteins of the oxygen-evolving complex and a large number of cofactors. It forms dimeric complexes.</text>
</comment>
<comment type="subcellular location">
    <subcellularLocation>
        <location evidence="1">Plastid</location>
        <location evidence="1">Chloroplast thylakoid membrane</location>
        <topology evidence="1">Single-pass membrane protein</topology>
    </subcellularLocation>
</comment>
<comment type="similarity">
    <text evidence="1">Belongs to the PsbE/PsbF family.</text>
</comment>
<organism>
    <name type="scientific">Solanum tuberosum</name>
    <name type="common">Potato</name>
    <dbReference type="NCBI Taxonomy" id="4113"/>
    <lineage>
        <taxon>Eukaryota</taxon>
        <taxon>Viridiplantae</taxon>
        <taxon>Streptophyta</taxon>
        <taxon>Embryophyta</taxon>
        <taxon>Tracheophyta</taxon>
        <taxon>Spermatophyta</taxon>
        <taxon>Magnoliopsida</taxon>
        <taxon>eudicotyledons</taxon>
        <taxon>Gunneridae</taxon>
        <taxon>Pentapetalae</taxon>
        <taxon>asterids</taxon>
        <taxon>lamiids</taxon>
        <taxon>Solanales</taxon>
        <taxon>Solanaceae</taxon>
        <taxon>Solanoideae</taxon>
        <taxon>Solaneae</taxon>
        <taxon>Solanum</taxon>
    </lineage>
</organism>
<geneLocation type="chloroplast"/>
<protein>
    <recommendedName>
        <fullName evidence="1">Cytochrome b559 subunit alpha</fullName>
    </recommendedName>
    <alternativeName>
        <fullName evidence="1">PSII reaction center subunit V</fullName>
    </alternativeName>
</protein>
<feature type="chain" id="PRO_0000233210" description="Cytochrome b559 subunit alpha">
    <location>
        <begin position="1"/>
        <end position="83"/>
    </location>
</feature>
<feature type="transmembrane region" description="Helical" evidence="1">
    <location>
        <begin position="21"/>
        <end position="35"/>
    </location>
</feature>
<feature type="binding site" description="axial binding residue" evidence="1">
    <location>
        <position position="23"/>
    </location>
    <ligand>
        <name>heme</name>
        <dbReference type="ChEBI" id="CHEBI:30413"/>
        <note>ligand shared with beta subunit</note>
    </ligand>
    <ligandPart>
        <name>Fe</name>
        <dbReference type="ChEBI" id="CHEBI:18248"/>
    </ligandPart>
</feature>
<keyword id="KW-0150">Chloroplast</keyword>
<keyword id="KW-0249">Electron transport</keyword>
<keyword id="KW-0349">Heme</keyword>
<keyword id="KW-0408">Iron</keyword>
<keyword id="KW-0472">Membrane</keyword>
<keyword id="KW-0479">Metal-binding</keyword>
<keyword id="KW-0602">Photosynthesis</keyword>
<keyword id="KW-0604">Photosystem II</keyword>
<keyword id="KW-0934">Plastid</keyword>
<keyword id="KW-1185">Reference proteome</keyword>
<keyword id="KW-0793">Thylakoid</keyword>
<keyword id="KW-0812">Transmembrane</keyword>
<keyword id="KW-1133">Transmembrane helix</keyword>
<keyword id="KW-0813">Transport</keyword>